<name>EFTS_AZOSB</name>
<evidence type="ECO:0000255" key="1">
    <source>
        <dbReference type="HAMAP-Rule" id="MF_00050"/>
    </source>
</evidence>
<reference key="1">
    <citation type="journal article" date="2006" name="Nat. Biotechnol.">
        <title>Complete genome of the mutualistic, N2-fixing grass endophyte Azoarcus sp. strain BH72.</title>
        <authorList>
            <person name="Krause A."/>
            <person name="Ramakumar A."/>
            <person name="Bartels D."/>
            <person name="Battistoni F."/>
            <person name="Bekel T."/>
            <person name="Boch J."/>
            <person name="Boehm M."/>
            <person name="Friedrich F."/>
            <person name="Hurek T."/>
            <person name="Krause L."/>
            <person name="Linke B."/>
            <person name="McHardy A.C."/>
            <person name="Sarkar A."/>
            <person name="Schneiker S."/>
            <person name="Syed A.A."/>
            <person name="Thauer R."/>
            <person name="Vorhoelter F.-J."/>
            <person name="Weidner S."/>
            <person name="Puehler A."/>
            <person name="Reinhold-Hurek B."/>
            <person name="Kaiser O."/>
            <person name="Goesmann A."/>
        </authorList>
    </citation>
    <scope>NUCLEOTIDE SEQUENCE [LARGE SCALE GENOMIC DNA]</scope>
    <source>
        <strain>BH72</strain>
    </source>
</reference>
<organism>
    <name type="scientific">Azoarcus sp. (strain BH72)</name>
    <dbReference type="NCBI Taxonomy" id="418699"/>
    <lineage>
        <taxon>Bacteria</taxon>
        <taxon>Pseudomonadati</taxon>
        <taxon>Pseudomonadota</taxon>
        <taxon>Betaproteobacteria</taxon>
        <taxon>Rhodocyclales</taxon>
        <taxon>Zoogloeaceae</taxon>
        <taxon>Azoarcus</taxon>
    </lineage>
</organism>
<protein>
    <recommendedName>
        <fullName evidence="1">Elongation factor Ts</fullName>
        <shortName evidence="1">EF-Ts</shortName>
    </recommendedName>
</protein>
<sequence>MAEITASMVKELREKTDAPMMECKKALTEAGGDMAKAEEVLRIKLGNKASKAAARVTAEGIVGTYLSADGKLAAMVELNCETDFVAKNDDFIGLAGSLATLVATKNPADVEALSALELDGQTVEAFRTALVGKIGENITVRRFSRIEAKGQVASYVHAGAKIGVLVDLVGGDEQLAKDLAMHIAASKPKSLDASGVSQELIESERRIAVEKAREAGKPEAMLEKIAEGTVQKFLKEVTLLGQPFVKDDKQTVEALLKARGASVASFVLYIVGEGIEKKVTDFAAEVAEQAAAAAAKK</sequence>
<gene>
    <name evidence="1" type="primary">tsf</name>
    <name type="ordered locus">azo1908</name>
</gene>
<dbReference type="EMBL" id="AM406670">
    <property type="protein sequence ID" value="CAL94525.1"/>
    <property type="molecule type" value="Genomic_DNA"/>
</dbReference>
<dbReference type="RefSeq" id="WP_011765641.1">
    <property type="nucleotide sequence ID" value="NC_008702.1"/>
</dbReference>
<dbReference type="SMR" id="A1K6S0"/>
<dbReference type="STRING" id="62928.azo1908"/>
<dbReference type="KEGG" id="aoa:dqs_2063"/>
<dbReference type="KEGG" id="azo:azo1908"/>
<dbReference type="eggNOG" id="COG0264">
    <property type="taxonomic scope" value="Bacteria"/>
</dbReference>
<dbReference type="HOGENOM" id="CLU_047155_0_2_4"/>
<dbReference type="OrthoDB" id="9808348at2"/>
<dbReference type="Proteomes" id="UP000002588">
    <property type="component" value="Chromosome"/>
</dbReference>
<dbReference type="GO" id="GO:0005737">
    <property type="term" value="C:cytoplasm"/>
    <property type="evidence" value="ECO:0007669"/>
    <property type="project" value="UniProtKB-SubCell"/>
</dbReference>
<dbReference type="GO" id="GO:0003746">
    <property type="term" value="F:translation elongation factor activity"/>
    <property type="evidence" value="ECO:0007669"/>
    <property type="project" value="UniProtKB-UniRule"/>
</dbReference>
<dbReference type="CDD" id="cd14275">
    <property type="entry name" value="UBA_EF-Ts"/>
    <property type="match status" value="1"/>
</dbReference>
<dbReference type="FunFam" id="1.10.286.20:FF:000001">
    <property type="entry name" value="Elongation factor Ts"/>
    <property type="match status" value="1"/>
</dbReference>
<dbReference type="FunFam" id="1.10.8.10:FF:000001">
    <property type="entry name" value="Elongation factor Ts"/>
    <property type="match status" value="1"/>
</dbReference>
<dbReference type="Gene3D" id="1.10.286.20">
    <property type="match status" value="1"/>
</dbReference>
<dbReference type="Gene3D" id="1.10.8.10">
    <property type="entry name" value="DNA helicase RuvA subunit, C-terminal domain"/>
    <property type="match status" value="1"/>
</dbReference>
<dbReference type="Gene3D" id="3.30.479.20">
    <property type="entry name" value="Elongation factor Ts, dimerisation domain"/>
    <property type="match status" value="2"/>
</dbReference>
<dbReference type="HAMAP" id="MF_00050">
    <property type="entry name" value="EF_Ts"/>
    <property type="match status" value="1"/>
</dbReference>
<dbReference type="InterPro" id="IPR036402">
    <property type="entry name" value="EF-Ts_dimer_sf"/>
</dbReference>
<dbReference type="InterPro" id="IPR001816">
    <property type="entry name" value="Transl_elong_EFTs/EF1B"/>
</dbReference>
<dbReference type="InterPro" id="IPR014039">
    <property type="entry name" value="Transl_elong_EFTs/EF1B_dimer"/>
</dbReference>
<dbReference type="InterPro" id="IPR018101">
    <property type="entry name" value="Transl_elong_Ts_CS"/>
</dbReference>
<dbReference type="InterPro" id="IPR009060">
    <property type="entry name" value="UBA-like_sf"/>
</dbReference>
<dbReference type="NCBIfam" id="TIGR00116">
    <property type="entry name" value="tsf"/>
    <property type="match status" value="1"/>
</dbReference>
<dbReference type="PANTHER" id="PTHR11741">
    <property type="entry name" value="ELONGATION FACTOR TS"/>
    <property type="match status" value="1"/>
</dbReference>
<dbReference type="PANTHER" id="PTHR11741:SF0">
    <property type="entry name" value="ELONGATION FACTOR TS, MITOCHONDRIAL"/>
    <property type="match status" value="1"/>
</dbReference>
<dbReference type="Pfam" id="PF00889">
    <property type="entry name" value="EF_TS"/>
    <property type="match status" value="1"/>
</dbReference>
<dbReference type="SUPFAM" id="SSF54713">
    <property type="entry name" value="Elongation factor Ts (EF-Ts), dimerisation domain"/>
    <property type="match status" value="2"/>
</dbReference>
<dbReference type="SUPFAM" id="SSF46934">
    <property type="entry name" value="UBA-like"/>
    <property type="match status" value="1"/>
</dbReference>
<dbReference type="PROSITE" id="PS01127">
    <property type="entry name" value="EF_TS_2"/>
    <property type="match status" value="1"/>
</dbReference>
<keyword id="KW-0963">Cytoplasm</keyword>
<keyword id="KW-0251">Elongation factor</keyword>
<keyword id="KW-0648">Protein biosynthesis</keyword>
<keyword id="KW-1185">Reference proteome</keyword>
<accession>A1K6S0</accession>
<proteinExistence type="inferred from homology"/>
<feature type="chain" id="PRO_1000006053" description="Elongation factor Ts">
    <location>
        <begin position="1"/>
        <end position="297"/>
    </location>
</feature>
<feature type="region of interest" description="Involved in Mg(2+) ion dislocation from EF-Tu" evidence="1">
    <location>
        <begin position="82"/>
        <end position="85"/>
    </location>
</feature>
<comment type="function">
    <text evidence="1">Associates with the EF-Tu.GDP complex and induces the exchange of GDP to GTP. It remains bound to the aminoacyl-tRNA.EF-Tu.GTP complex up to the GTP hydrolysis stage on the ribosome.</text>
</comment>
<comment type="subcellular location">
    <subcellularLocation>
        <location evidence="1">Cytoplasm</location>
    </subcellularLocation>
</comment>
<comment type="similarity">
    <text evidence="1">Belongs to the EF-Ts family.</text>
</comment>